<evidence type="ECO:0000269" key="1">
    <source>
    </source>
</evidence>
<evidence type="ECO:0000305" key="2"/>
<accession>P85148</accession>
<comment type="function">
    <text evidence="1">Bacteriocin active against the Gram-negative bacteria C.jejuni, Y.enterocolitica and Y.pseudotuberculosis, and the Gram-positive bacteria S.aureus, S.epidermidis, L.monocytogenes and Listeria spp. When added to the drinking water of chickens, causes a decrease in the levels of C.jejuni and S.enteritidis in the ceca, and in the levels of S.enteritidis in the liver and spleen.</text>
</comment>
<comment type="subcellular location">
    <subcellularLocation>
        <location evidence="1">Secreted</location>
    </subcellularLocation>
</comment>
<comment type="mass spectrometry"/>
<comment type="similarity">
    <text evidence="1">Belongs to the bacteriocin class IIA/YGNGV family.</text>
</comment>
<organism>
    <name type="scientific">Enterococcus faecium</name>
    <name type="common">Streptococcus faecium</name>
    <dbReference type="NCBI Taxonomy" id="1352"/>
    <lineage>
        <taxon>Bacteria</taxon>
        <taxon>Bacillati</taxon>
        <taxon>Bacillota</taxon>
        <taxon>Bacilli</taxon>
        <taxon>Lactobacillales</taxon>
        <taxon>Enterococcaceae</taxon>
        <taxon>Enterococcus</taxon>
    </lineage>
</organism>
<name>ETC50_ENTFC</name>
<keyword id="KW-0044">Antibiotic</keyword>
<keyword id="KW-0929">Antimicrobial</keyword>
<keyword id="KW-0078">Bacteriocin</keyword>
<keyword id="KW-0903">Direct protein sequencing</keyword>
<keyword id="KW-0964">Secreted</keyword>
<sequence>TTKNYGNGVCNSVNWCQCGNVWASCNLATGCAAWLCKLA</sequence>
<feature type="chain" id="PRO_0000341451" description="Bacteriocin E50-52">
    <location>
        <begin position="1"/>
        <end position="39"/>
    </location>
</feature>
<dbReference type="GO" id="GO:0005576">
    <property type="term" value="C:extracellular region"/>
    <property type="evidence" value="ECO:0007669"/>
    <property type="project" value="UniProtKB-SubCell"/>
</dbReference>
<dbReference type="GO" id="GO:0042742">
    <property type="term" value="P:defense response to bacterium"/>
    <property type="evidence" value="ECO:0007669"/>
    <property type="project" value="UniProtKB-KW"/>
</dbReference>
<dbReference type="GO" id="GO:0031640">
    <property type="term" value="P:killing of cells of another organism"/>
    <property type="evidence" value="ECO:0007669"/>
    <property type="project" value="UniProtKB-KW"/>
</dbReference>
<proteinExistence type="evidence at protein level"/>
<reference evidence="2" key="1">
    <citation type="journal article" date="2008" name="J. Agric. Food Chem.">
        <title>Diverse antimicrobial killing by Enterococcus faecium E 50-52 bacteriocin.</title>
        <authorList>
            <person name="Svetoch E.A."/>
            <person name="Eruslanov B.V."/>
            <person name="Perelygin V.V."/>
            <person name="Mitsevich E.V."/>
            <person name="Mitsevich I.P."/>
            <person name="Borzenkov V.N."/>
            <person name="Levchuk V.P."/>
            <person name="Svetoch O.E."/>
            <person name="Kovalev Y.N."/>
            <person name="Stepanshin Y.G."/>
            <person name="Siragusa G.R."/>
            <person name="Seal B.S."/>
            <person name="Stern N.J."/>
        </authorList>
    </citation>
    <scope>PROTEIN SEQUENCE</scope>
    <scope>FUNCTION</scope>
    <scope>SUBCELLULAR LOCATION</scope>
    <scope>MASS SPECTROMETRY</scope>
    <source>
        <strain evidence="1">NRRL B-30746 / 50-52</strain>
    </source>
</reference>
<protein>
    <recommendedName>
        <fullName>Bacteriocin E50-52</fullName>
    </recommendedName>
</protein>